<proteinExistence type="inferred from homology"/>
<reference key="1">
    <citation type="journal article" date="2005" name="Nature">
        <title>The map-based sequence of the rice genome.</title>
        <authorList>
            <consortium name="International rice genome sequencing project (IRGSP)"/>
        </authorList>
    </citation>
    <scope>NUCLEOTIDE SEQUENCE [LARGE SCALE GENOMIC DNA]</scope>
    <source>
        <strain>cv. Nipponbare</strain>
    </source>
</reference>
<reference key="2">
    <citation type="journal article" date="2008" name="Nucleic Acids Res.">
        <title>The rice annotation project database (RAP-DB): 2008 update.</title>
        <authorList>
            <consortium name="The rice annotation project (RAP)"/>
        </authorList>
    </citation>
    <scope>GENOME REANNOTATION</scope>
    <source>
        <strain>cv. Nipponbare</strain>
    </source>
</reference>
<reference key="3">
    <citation type="journal article" date="2013" name="Rice">
        <title>Improvement of the Oryza sativa Nipponbare reference genome using next generation sequence and optical map data.</title>
        <authorList>
            <person name="Kawahara Y."/>
            <person name="de la Bastide M."/>
            <person name="Hamilton J.P."/>
            <person name="Kanamori H."/>
            <person name="McCombie W.R."/>
            <person name="Ouyang S."/>
            <person name="Schwartz D.C."/>
            <person name="Tanaka T."/>
            <person name="Wu J."/>
            <person name="Zhou S."/>
            <person name="Childs K.L."/>
            <person name="Davidson R.M."/>
            <person name="Lin H."/>
            <person name="Quesada-Ocampo L."/>
            <person name="Vaillancourt B."/>
            <person name="Sakai H."/>
            <person name="Lee S.S."/>
            <person name="Kim J."/>
            <person name="Numa H."/>
            <person name="Itoh T."/>
            <person name="Buell C.R."/>
            <person name="Matsumoto T."/>
        </authorList>
    </citation>
    <scope>GENOME REANNOTATION</scope>
    <source>
        <strain>cv. Nipponbare</strain>
    </source>
</reference>
<feature type="chain" id="PRO_0000440777" description="Leucoanthocyanidin dioxygenase 2">
    <location>
        <begin position="1"/>
        <end position="373"/>
    </location>
</feature>
<feature type="domain" description="Fe2OG dioxygenase" evidence="4">
    <location>
        <begin position="216"/>
        <end position="315"/>
    </location>
</feature>
<feature type="binding site" evidence="4">
    <location>
        <position position="240"/>
    </location>
    <ligand>
        <name>Fe cation</name>
        <dbReference type="ChEBI" id="CHEBI:24875"/>
    </ligand>
</feature>
<feature type="binding site" evidence="4">
    <location>
        <position position="242"/>
    </location>
    <ligand>
        <name>Fe cation</name>
        <dbReference type="ChEBI" id="CHEBI:24875"/>
    </ligand>
</feature>
<feature type="binding site" evidence="4">
    <location>
        <position position="296"/>
    </location>
    <ligand>
        <name>Fe cation</name>
        <dbReference type="ChEBI" id="CHEBI:24875"/>
    </ligand>
</feature>
<feature type="binding site" evidence="4">
    <location>
        <position position="306"/>
    </location>
    <ligand>
        <name>2-oxoglutarate</name>
        <dbReference type="ChEBI" id="CHEBI:16810"/>
    </ligand>
</feature>
<protein>
    <recommendedName>
        <fullName evidence="5">Leucoanthocyanidin dioxygenase 2</fullName>
        <shortName evidence="5">LDOX2</shortName>
        <shortName evidence="5">Leucocyanidin oxygenase 2</shortName>
        <ecNumber evidence="1">1.14.20.4</ecNumber>
    </recommendedName>
    <alternativeName>
        <fullName evidence="5">Anthocyanidin synthase 2</fullName>
        <shortName evidence="5">OsANS2</shortName>
    </alternativeName>
    <alternativeName>
        <fullName evidence="5">Leucoanthocyanidin hydroxylase 2</fullName>
    </alternativeName>
</protein>
<gene>
    <name evidence="5" type="primary">ANS2</name>
    <name evidence="8" type="ordered locus">Os06g0626700</name>
    <name evidence="5" type="ordered locus">LOC_Os06g42130</name>
    <name evidence="7" type="ORF">OSJNBa0072A21.33</name>
    <name evidence="6" type="ORF">P0530H05.4</name>
</gene>
<evidence type="ECO:0000250" key="1">
    <source>
        <dbReference type="UniProtKB" id="A2WQ39"/>
    </source>
</evidence>
<evidence type="ECO:0000250" key="2">
    <source>
        <dbReference type="UniProtKB" id="Q93VC3"/>
    </source>
</evidence>
<evidence type="ECO:0000250" key="3">
    <source>
        <dbReference type="UniProtKB" id="Q96323"/>
    </source>
</evidence>
<evidence type="ECO:0000255" key="4">
    <source>
        <dbReference type="PROSITE-ProRule" id="PRU00805"/>
    </source>
</evidence>
<evidence type="ECO:0000305" key="5"/>
<evidence type="ECO:0000312" key="6">
    <source>
        <dbReference type="EMBL" id="BAD37378.1"/>
    </source>
</evidence>
<evidence type="ECO:0000312" key="7">
    <source>
        <dbReference type="EMBL" id="BAD37752.1"/>
    </source>
</evidence>
<evidence type="ECO:0000312" key="8">
    <source>
        <dbReference type="EMBL" id="BAF20033.1"/>
    </source>
</evidence>
<sequence length="373" mass="40712">MTDVELRVEALSLSDVSAIPPEYVRLEEERTDLGDALEVARAASDDADAARIPVVDISAFDGDGRRACVEAVRAAAEEWGVMHIAGHGLPGDVLDRLRAAGEAFFALPIAEKEAYANDPAAGRLQGYGSKLAANASGKREWEDYLFHLVHPDHLADHSLWPANPPEYVPVSRDFGGRVRTLASKLLAILSLGLGLPEETLERRLRRHDQHGVDDDLLLQLKINYYPRCPRPDLAVGVEAHTDVSALSFILHNGVPGLQAHHAGTWVTARSEQGTIVVHVGDALEILTNGRYTSVLHRSLVSRDAVRVSWVVFCEPPPESVLLQPLPELLANGAGKPLFAPRTFKQHVQRKLFKKLKDQQDNNAAAASNGIIPK</sequence>
<dbReference type="EC" id="1.14.20.4" evidence="1"/>
<dbReference type="EMBL" id="AP003541">
    <property type="protein sequence ID" value="BAD37378.1"/>
    <property type="molecule type" value="Genomic_DNA"/>
</dbReference>
<dbReference type="EMBL" id="AP004737">
    <property type="protein sequence ID" value="BAD37752.1"/>
    <property type="molecule type" value="Genomic_DNA"/>
</dbReference>
<dbReference type="EMBL" id="AP008212">
    <property type="protein sequence ID" value="BAF20033.1"/>
    <property type="molecule type" value="Genomic_DNA"/>
</dbReference>
<dbReference type="EMBL" id="AP014962">
    <property type="protein sequence ID" value="BAS98704.1"/>
    <property type="molecule type" value="Genomic_DNA"/>
</dbReference>
<dbReference type="RefSeq" id="XP_015641525.1">
    <property type="nucleotide sequence ID" value="XM_015786039.1"/>
</dbReference>
<dbReference type="SMR" id="Q67VR7"/>
<dbReference type="FunCoup" id="Q67VR7">
    <property type="interactions" value="131"/>
</dbReference>
<dbReference type="STRING" id="39947.Q67VR7"/>
<dbReference type="PaxDb" id="39947-Q67VR7"/>
<dbReference type="EnsemblPlants" id="Os06t0626700-00">
    <property type="protein sequence ID" value="Os06t0626700-00"/>
    <property type="gene ID" value="Os06g0626700"/>
</dbReference>
<dbReference type="Gramene" id="Os06t0626700-00">
    <property type="protein sequence ID" value="Os06t0626700-00"/>
    <property type="gene ID" value="Os06g0626700"/>
</dbReference>
<dbReference type="KEGG" id="dosa:Os06g0626700"/>
<dbReference type="eggNOG" id="KOG0143">
    <property type="taxonomic scope" value="Eukaryota"/>
</dbReference>
<dbReference type="HOGENOM" id="CLU_010119_16_2_1"/>
<dbReference type="InParanoid" id="Q67VR7"/>
<dbReference type="OMA" id="SWVVFAQ"/>
<dbReference type="OrthoDB" id="288590at2759"/>
<dbReference type="PlantReactome" id="R-OSA-1119440">
    <property type="pathway name" value="Anthocyanin biosynthesis (pelargonidin 3-O-glucoside, cyanidin 3-O-glucoside)"/>
</dbReference>
<dbReference type="PlantReactome" id="R-OSA-1119514">
    <property type="pathway name" value="Anthocyanin biosynthesis (delphinidin 3-O-glucoside)"/>
</dbReference>
<dbReference type="UniPathway" id="UPA00009"/>
<dbReference type="Proteomes" id="UP000000763">
    <property type="component" value="Chromosome 6"/>
</dbReference>
<dbReference type="Proteomes" id="UP000059680">
    <property type="component" value="Chromosome 6"/>
</dbReference>
<dbReference type="GO" id="GO:0016706">
    <property type="term" value="F:2-oxoglutarate-dependent dioxygenase activity"/>
    <property type="evidence" value="ECO:0000318"/>
    <property type="project" value="GO_Central"/>
</dbReference>
<dbReference type="GO" id="GO:0031418">
    <property type="term" value="F:L-ascorbic acid binding"/>
    <property type="evidence" value="ECO:0007669"/>
    <property type="project" value="UniProtKB-KW"/>
</dbReference>
<dbReference type="GO" id="GO:0050589">
    <property type="term" value="F:leucocyanidin oxygenase activity"/>
    <property type="evidence" value="ECO:0007669"/>
    <property type="project" value="UniProtKB-EC"/>
</dbReference>
<dbReference type="GO" id="GO:0046872">
    <property type="term" value="F:metal ion binding"/>
    <property type="evidence" value="ECO:0007669"/>
    <property type="project" value="UniProtKB-KW"/>
</dbReference>
<dbReference type="GO" id="GO:0009718">
    <property type="term" value="P:anthocyanin-containing compound biosynthetic process"/>
    <property type="evidence" value="ECO:0007669"/>
    <property type="project" value="UniProtKB-UniPathway"/>
</dbReference>
<dbReference type="FunFam" id="2.60.120.330:FF:000009">
    <property type="entry name" value="Flavonol synthase"/>
    <property type="match status" value="1"/>
</dbReference>
<dbReference type="Gene3D" id="2.60.120.330">
    <property type="entry name" value="B-lactam Antibiotic, Isopenicillin N Synthase, Chain"/>
    <property type="match status" value="1"/>
</dbReference>
<dbReference type="InterPro" id="IPR026992">
    <property type="entry name" value="DIOX_N"/>
</dbReference>
<dbReference type="InterPro" id="IPR044861">
    <property type="entry name" value="IPNS-like_FE2OG_OXY"/>
</dbReference>
<dbReference type="InterPro" id="IPR027443">
    <property type="entry name" value="IPNS-like_sf"/>
</dbReference>
<dbReference type="InterPro" id="IPR050231">
    <property type="entry name" value="Iron_ascorbate_oxido_reductase"/>
</dbReference>
<dbReference type="InterPro" id="IPR005123">
    <property type="entry name" value="Oxoglu/Fe-dep_dioxygenase_dom"/>
</dbReference>
<dbReference type="PANTHER" id="PTHR47990">
    <property type="entry name" value="2-OXOGLUTARATE (2OG) AND FE(II)-DEPENDENT OXYGENASE SUPERFAMILY PROTEIN-RELATED"/>
    <property type="match status" value="1"/>
</dbReference>
<dbReference type="Pfam" id="PF03171">
    <property type="entry name" value="2OG-FeII_Oxy"/>
    <property type="match status" value="1"/>
</dbReference>
<dbReference type="Pfam" id="PF14226">
    <property type="entry name" value="DIOX_N"/>
    <property type="match status" value="1"/>
</dbReference>
<dbReference type="PRINTS" id="PR00682">
    <property type="entry name" value="IPNSYNTHASE"/>
</dbReference>
<dbReference type="SUPFAM" id="SSF51197">
    <property type="entry name" value="Clavaminate synthase-like"/>
    <property type="match status" value="1"/>
</dbReference>
<dbReference type="PROSITE" id="PS51471">
    <property type="entry name" value="FE2OG_OXY"/>
    <property type="match status" value="1"/>
</dbReference>
<comment type="function">
    <text evidence="2">Involved in anthocyanin and protoanthocyanidin biosynthesis by catalyzing the oxidation of leucoanthocyanidins into anthocyanidins.</text>
</comment>
<comment type="catalytic activity">
    <reaction evidence="1">
        <text>a (2R,3S,4S)-leucoanthocyanidin + 2-oxoglutarate + O2 = a 4-H-anthocyanidin with a 3-hydroxy group + succinate + CO2 + 2 H2O</text>
        <dbReference type="Rhea" id="RHEA:54432"/>
        <dbReference type="ChEBI" id="CHEBI:15377"/>
        <dbReference type="ChEBI" id="CHEBI:15379"/>
        <dbReference type="ChEBI" id="CHEBI:16526"/>
        <dbReference type="ChEBI" id="CHEBI:16810"/>
        <dbReference type="ChEBI" id="CHEBI:30031"/>
        <dbReference type="ChEBI" id="CHEBI:138176"/>
        <dbReference type="ChEBI" id="CHEBI:138177"/>
        <dbReference type="EC" id="1.14.20.4"/>
    </reaction>
</comment>
<comment type="cofactor">
    <cofactor evidence="3">
        <name>L-ascorbate</name>
        <dbReference type="ChEBI" id="CHEBI:38290"/>
    </cofactor>
    <text evidence="3">Binds 1 ascorbate molecule per subunit.</text>
</comment>
<comment type="cofactor">
    <cofactor evidence="4">
        <name>Fe(2+)</name>
        <dbReference type="ChEBI" id="CHEBI:29033"/>
    </cofactor>
    <text evidence="4">Binds 1 Fe(2+) ion per subunit.</text>
</comment>
<comment type="pathway">
    <text evidence="5">Pigment biosynthesis; anthocyanin biosynthesis.</text>
</comment>
<comment type="similarity">
    <text evidence="5">Belongs to the iron/ascorbate-dependent oxidoreductase family.</text>
</comment>
<accession>Q67VR7</accession>
<name>ANS2_ORYSJ</name>
<keyword id="KW-0223">Dioxygenase</keyword>
<keyword id="KW-0284">Flavonoid biosynthesis</keyword>
<keyword id="KW-0408">Iron</keyword>
<keyword id="KW-0479">Metal-binding</keyword>
<keyword id="KW-0560">Oxidoreductase</keyword>
<keyword id="KW-1185">Reference proteome</keyword>
<keyword id="KW-0847">Vitamin C</keyword>
<organism>
    <name type="scientific">Oryza sativa subsp. japonica</name>
    <name type="common">Rice</name>
    <dbReference type="NCBI Taxonomy" id="39947"/>
    <lineage>
        <taxon>Eukaryota</taxon>
        <taxon>Viridiplantae</taxon>
        <taxon>Streptophyta</taxon>
        <taxon>Embryophyta</taxon>
        <taxon>Tracheophyta</taxon>
        <taxon>Spermatophyta</taxon>
        <taxon>Magnoliopsida</taxon>
        <taxon>Liliopsida</taxon>
        <taxon>Poales</taxon>
        <taxon>Poaceae</taxon>
        <taxon>BOP clade</taxon>
        <taxon>Oryzoideae</taxon>
        <taxon>Oryzeae</taxon>
        <taxon>Oryzinae</taxon>
        <taxon>Oryza</taxon>
        <taxon>Oryza sativa</taxon>
    </lineage>
</organism>